<keyword id="KW-1015">Disulfide bond</keyword>
<keyword id="KW-0872">Ion channel impairing toxin</keyword>
<keyword id="KW-0960">Knottin</keyword>
<keyword id="KW-0964">Secreted</keyword>
<keyword id="KW-0732">Signal</keyword>
<keyword id="KW-0800">Toxin</keyword>
<accession>D2Y2C9</accession>
<dbReference type="EMBL" id="GU293006">
    <property type="protein sequence ID" value="ADB56822.1"/>
    <property type="status" value="ALT_INIT"/>
    <property type="molecule type" value="mRNA"/>
</dbReference>
<dbReference type="SMR" id="D2Y2C9"/>
<dbReference type="ArachnoServer" id="AS001745">
    <property type="toxin name" value="U13-theraphotoxin-Hhn1a"/>
</dbReference>
<dbReference type="GO" id="GO:0005576">
    <property type="term" value="C:extracellular region"/>
    <property type="evidence" value="ECO:0007669"/>
    <property type="project" value="UniProtKB-SubCell"/>
</dbReference>
<dbReference type="GO" id="GO:0099106">
    <property type="term" value="F:ion channel regulator activity"/>
    <property type="evidence" value="ECO:0007669"/>
    <property type="project" value="UniProtKB-KW"/>
</dbReference>
<dbReference type="GO" id="GO:0090729">
    <property type="term" value="F:toxin activity"/>
    <property type="evidence" value="ECO:0007669"/>
    <property type="project" value="UniProtKB-KW"/>
</dbReference>
<reference key="1">
    <citation type="journal article" date="2010" name="J. Proteome Res.">
        <title>Molecular diversification of peptide toxins from the tarantula Haplopelma hainanum (Ornithoctonus hainana) venom based on transcriptomic, peptidomic, and genomic analyses.</title>
        <authorList>
            <person name="Tang X."/>
            <person name="Zhang Y."/>
            <person name="Hu W."/>
            <person name="Xu D."/>
            <person name="Tao H."/>
            <person name="Yang X."/>
            <person name="Li Y."/>
            <person name="Jiang L."/>
            <person name="Liang S."/>
        </authorList>
    </citation>
    <scope>NUCLEOTIDE SEQUENCE [LARGE SCALE MRNA]</scope>
    <source>
        <tissue>Venom gland</tissue>
    </source>
</reference>
<feature type="signal peptide" evidence="2">
    <location>
        <begin position="1"/>
        <end position="23"/>
    </location>
</feature>
<feature type="propeptide" id="PRO_0000401051" evidence="1">
    <location>
        <begin position="24"/>
        <end position="47"/>
    </location>
</feature>
<feature type="peptide" id="PRO_0000401052" description="Hainantoxin-XX">
    <location>
        <begin position="48"/>
        <end position="78"/>
    </location>
</feature>
<feature type="disulfide bond" evidence="1">
    <location>
        <begin position="49"/>
        <end position="62"/>
    </location>
</feature>
<feature type="disulfide bond" evidence="1">
    <location>
        <begin position="56"/>
        <end position="66"/>
    </location>
</feature>
<feature type="disulfide bond" evidence="1">
    <location>
        <begin position="61"/>
        <end position="77"/>
    </location>
</feature>
<organism>
    <name type="scientific">Cyriopagopus hainanus</name>
    <name type="common">Chinese bird spider</name>
    <name type="synonym">Haplopelma hainanum</name>
    <dbReference type="NCBI Taxonomy" id="209901"/>
    <lineage>
        <taxon>Eukaryota</taxon>
        <taxon>Metazoa</taxon>
        <taxon>Ecdysozoa</taxon>
        <taxon>Arthropoda</taxon>
        <taxon>Chelicerata</taxon>
        <taxon>Arachnida</taxon>
        <taxon>Araneae</taxon>
        <taxon>Mygalomorphae</taxon>
        <taxon>Theraphosidae</taxon>
        <taxon>Haplopelma</taxon>
    </lineage>
</organism>
<evidence type="ECO:0000250" key="1"/>
<evidence type="ECO:0000255" key="2"/>
<evidence type="ECO:0000305" key="3"/>
<name>H20A1_CYRHA</name>
<comment type="function">
    <text>Putative ion channel inhibitor.</text>
</comment>
<comment type="subcellular location">
    <subcellularLocation>
        <location evidence="1">Secreted</location>
    </subcellularLocation>
</comment>
<comment type="tissue specificity">
    <text>Expressed by the venom gland.</text>
</comment>
<comment type="domain">
    <text evidence="1">The presence of a 'disulfide through disulfide knot' structurally defines this protein as a knottin.</text>
</comment>
<comment type="similarity">
    <text>Belongs to the hainantoxin family. 20 subfamily.</text>
</comment>
<comment type="sequence caution" evidence="3">
    <conflict type="erroneous initiation">
        <sequence resource="EMBL-CDS" id="ADB56822"/>
    </conflict>
    <text>Extended N-terminus.</text>
</comment>
<proteinExistence type="evidence at transcript level"/>
<sequence>MKSATLLALSFLLIALYFLICEAEHSRYEEHEILEENMGDVVNLEQRSCAKPGEMCMRIKCCDGQCGCNRGTGRCFCK</sequence>
<protein>
    <recommendedName>
        <fullName>Hainantoxin-XX</fullName>
        <shortName>HNTX-XX</shortName>
    </recommendedName>
    <alternativeName>
        <fullName>Peptide F8-26.11</fullName>
    </alternativeName>
</protein>